<comment type="function">
    <text evidence="1 2 4">Catalyzes the interconversion through a 2-keto intermediate of uridine diphosphogalactopyranose (UDP-GalP) into uridine diphosphogalactofuranose (UDP-GalF).</text>
</comment>
<comment type="catalytic activity">
    <reaction evidence="4">
        <text>UDP-alpha-D-galactose = UDP-alpha-D-galactofuranose</text>
        <dbReference type="Rhea" id="RHEA:24132"/>
        <dbReference type="ChEBI" id="CHEBI:66914"/>
        <dbReference type="ChEBI" id="CHEBI:66915"/>
        <dbReference type="EC" id="5.4.99.9"/>
    </reaction>
</comment>
<comment type="cofactor">
    <cofactor evidence="4">
        <name>FAD</name>
        <dbReference type="ChEBI" id="CHEBI:57692"/>
    </cofactor>
    <text evidence="4">Binds 1 FAD per subunit.</text>
</comment>
<comment type="biophysicochemical properties">
    <kinetics>
        <KM evidence="2">194 uM for UDP-GalF</KM>
        <text>kcat is 1.5 sec(-1) for UDP-GalF.</text>
    </kinetics>
</comment>
<comment type="pathway">
    <text>Bacterial outer membrane biogenesis; lipopolysaccharide biosynthesis.</text>
</comment>
<comment type="subunit">
    <text evidence="3">Homodimer.</text>
</comment>
<comment type="interaction">
    <interactant intactId="EBI-558730">
        <id>P37747</id>
    </interactant>
    <interactant intactId="EBI-553884">
        <id>P11868</id>
        <label>tdcD</label>
    </interactant>
    <organismsDiffer>false</organismsDiffer>
    <experiments>2</experiments>
</comment>
<comment type="mass spectrometry" mass="42960.0" error="8.0" method="Electrospray" evidence="4"/>
<comment type="similarity">
    <text evidence="5">Belongs to the UDP-galactopyranose/dTDP-fucopyranose mutase family.</text>
</comment>
<accession>P37747</accession>
<organism>
    <name type="scientific">Escherichia coli (strain K12)</name>
    <dbReference type="NCBI Taxonomy" id="83333"/>
    <lineage>
        <taxon>Bacteria</taxon>
        <taxon>Pseudomonadati</taxon>
        <taxon>Pseudomonadota</taxon>
        <taxon>Gammaproteobacteria</taxon>
        <taxon>Enterobacterales</taxon>
        <taxon>Enterobacteriaceae</taxon>
        <taxon>Escherichia</taxon>
    </lineage>
</organism>
<gene>
    <name type="primary">glf</name>
    <name type="synonym">yefE</name>
    <name type="ordered locus">b2036</name>
    <name type="ordered locus">JW2021</name>
</gene>
<evidence type="ECO:0000250" key="1"/>
<evidence type="ECO:0000269" key="2">
    <source>
    </source>
</evidence>
<evidence type="ECO:0000269" key="3">
    <source>
    </source>
</evidence>
<evidence type="ECO:0000269" key="4">
    <source>
    </source>
</evidence>
<evidence type="ECO:0000305" key="5"/>
<evidence type="ECO:0007829" key="6">
    <source>
        <dbReference type="PDB" id="1I8T"/>
    </source>
</evidence>
<feature type="chain" id="PRO_0000087508" description="UDP-galactopyranose mutase">
    <location>
        <begin position="1"/>
        <end position="367"/>
    </location>
</feature>
<feature type="binding site" evidence="3">
    <location>
        <position position="12"/>
    </location>
    <ligand>
        <name>FAD</name>
        <dbReference type="ChEBI" id="CHEBI:57692"/>
    </ligand>
</feature>
<feature type="binding site" evidence="1">
    <location>
        <position position="12"/>
    </location>
    <ligand>
        <name>UDP-alpha-D-galactose</name>
        <dbReference type="ChEBI" id="CHEBI:66914"/>
    </ligand>
</feature>
<feature type="binding site" evidence="3">
    <location>
        <begin position="31"/>
        <end position="32"/>
    </location>
    <ligand>
        <name>FAD</name>
        <dbReference type="ChEBI" id="CHEBI:57692"/>
    </ligand>
</feature>
<feature type="binding site" evidence="3">
    <location>
        <position position="39"/>
    </location>
    <ligand>
        <name>FAD</name>
        <dbReference type="ChEBI" id="CHEBI:57692"/>
    </ligand>
</feature>
<feature type="binding site" evidence="3">
    <location>
        <begin position="56"/>
        <end position="57"/>
    </location>
    <ligand>
        <name>FAD</name>
        <dbReference type="ChEBI" id="CHEBI:57692"/>
    </ligand>
</feature>
<feature type="binding site" evidence="1">
    <location>
        <position position="80"/>
    </location>
    <ligand>
        <name>UDP-alpha-D-galactose</name>
        <dbReference type="ChEBI" id="CHEBI:66914"/>
    </ligand>
</feature>
<feature type="binding site" evidence="1">
    <location>
        <position position="152"/>
    </location>
    <ligand>
        <name>UDP-alpha-D-galactose</name>
        <dbReference type="ChEBI" id="CHEBI:66914"/>
    </ligand>
</feature>
<feature type="binding site" evidence="1">
    <location>
        <position position="156"/>
    </location>
    <ligand>
        <name>UDP-alpha-D-galactose</name>
        <dbReference type="ChEBI" id="CHEBI:66914"/>
    </ligand>
</feature>
<feature type="binding site" evidence="1">
    <location>
        <position position="181"/>
    </location>
    <ligand>
        <name>UDP-alpha-D-galactose</name>
        <dbReference type="ChEBI" id="CHEBI:66914"/>
    </ligand>
</feature>
<feature type="binding site" evidence="3">
    <location>
        <begin position="212"/>
        <end position="213"/>
    </location>
    <ligand>
        <name>FAD</name>
        <dbReference type="ChEBI" id="CHEBI:57692"/>
    </ligand>
</feature>
<feature type="binding site" evidence="1">
    <location>
        <position position="268"/>
    </location>
    <ligand>
        <name>UDP-alpha-D-galactose</name>
        <dbReference type="ChEBI" id="CHEBI:66914"/>
    </ligand>
</feature>
<feature type="binding site" evidence="1">
    <location>
        <position position="278"/>
    </location>
    <ligand>
        <name>UDP-alpha-D-galactose</name>
        <dbReference type="ChEBI" id="CHEBI:66914"/>
    </ligand>
</feature>
<feature type="binding site" evidence="1">
    <location>
        <position position="311"/>
    </location>
    <ligand>
        <name>UDP-alpha-D-galactose</name>
        <dbReference type="ChEBI" id="CHEBI:66914"/>
    </ligand>
</feature>
<feature type="binding site" evidence="1">
    <location>
        <position position="340"/>
    </location>
    <ligand>
        <name>FAD</name>
        <dbReference type="ChEBI" id="CHEBI:57692"/>
    </ligand>
</feature>
<feature type="binding site" evidence="1">
    <location>
        <position position="346"/>
    </location>
    <ligand>
        <name>UDP-alpha-D-galactose</name>
        <dbReference type="ChEBI" id="CHEBI:66914"/>
    </ligand>
</feature>
<feature type="binding site" evidence="3">
    <location>
        <begin position="347"/>
        <end position="352"/>
    </location>
    <ligand>
        <name>FAD</name>
        <dbReference type="ChEBI" id="CHEBI:57692"/>
    </ligand>
</feature>
<feature type="mutagenesis site" description="3-fold decrease in the mutase activity." evidence="3">
    <original>Y</original>
    <variation>F</variation>
    <location>
        <position position="151"/>
    </location>
</feature>
<feature type="mutagenesis site" description="Loss of mutase activity." evidence="3">
    <original>W</original>
    <variation>A</variation>
    <location>
        <position position="156"/>
    </location>
</feature>
<feature type="mutagenesis site" description="2-fold decrease in the mutase activity." evidence="3">
    <original>W</original>
    <variation>Y</variation>
    <location>
        <position position="156"/>
    </location>
</feature>
<feature type="mutagenesis site" description="Increase in the mutase activity." evidence="3">
    <original>Y</original>
    <variation>F</variation>
    <location>
        <position position="181"/>
    </location>
</feature>
<feature type="mutagenesis site" description="Loss of mutase activity." evidence="3">
    <original>Y</original>
    <variation>F</variation>
    <location>
        <position position="311"/>
    </location>
</feature>
<feature type="mutagenesis site" description="Loss of mutase activity." evidence="3">
    <original>Y</original>
    <variation>F</variation>
    <location>
        <position position="346"/>
    </location>
</feature>
<feature type="strand" evidence="6">
    <location>
        <begin position="2"/>
        <end position="7"/>
    </location>
</feature>
<feature type="helix" evidence="6">
    <location>
        <begin position="11"/>
        <end position="20"/>
    </location>
</feature>
<feature type="helix" evidence="6">
    <location>
        <begin position="21"/>
        <end position="23"/>
    </location>
</feature>
<feature type="strand" evidence="6">
    <location>
        <begin position="27"/>
        <end position="30"/>
    </location>
</feature>
<feature type="strand" evidence="6">
    <location>
        <begin position="32"/>
        <end position="37"/>
    </location>
</feature>
<feature type="helix" evidence="6">
    <location>
        <begin position="38"/>
        <end position="40"/>
    </location>
</feature>
<feature type="strand" evidence="6">
    <location>
        <begin position="42"/>
        <end position="45"/>
    </location>
</feature>
<feature type="strand" evidence="6">
    <location>
        <begin position="48"/>
        <end position="51"/>
    </location>
</feature>
<feature type="strand" evidence="6">
    <location>
        <begin position="58"/>
        <end position="61"/>
    </location>
</feature>
<feature type="helix" evidence="6">
    <location>
        <begin position="63"/>
        <end position="70"/>
    </location>
</feature>
<feature type="strand" evidence="6">
    <location>
        <begin position="83"/>
        <end position="86"/>
    </location>
</feature>
<feature type="strand" evidence="6">
    <location>
        <begin position="89"/>
        <end position="96"/>
    </location>
</feature>
<feature type="helix" evidence="6">
    <location>
        <begin position="97"/>
        <end position="104"/>
    </location>
</feature>
<feature type="helix" evidence="6">
    <location>
        <begin position="109"/>
        <end position="119"/>
    </location>
</feature>
<feature type="turn" evidence="6">
    <location>
        <begin position="120"/>
        <end position="123"/>
    </location>
</feature>
<feature type="helix" evidence="6">
    <location>
        <begin position="131"/>
        <end position="147"/>
    </location>
</feature>
<feature type="helix" evidence="6">
    <location>
        <begin position="149"/>
        <end position="156"/>
    </location>
</feature>
<feature type="helix" evidence="6">
    <location>
        <begin position="160"/>
        <end position="162"/>
    </location>
</feature>
<feature type="strand" evidence="6">
    <location>
        <begin position="175"/>
        <end position="177"/>
    </location>
</feature>
<feature type="strand" evidence="6">
    <location>
        <begin position="185"/>
        <end position="188"/>
    </location>
</feature>
<feature type="helix" evidence="6">
    <location>
        <begin position="194"/>
        <end position="202"/>
    </location>
</feature>
<feature type="strand" evidence="6">
    <location>
        <begin position="205"/>
        <end position="208"/>
    </location>
</feature>
<feature type="helix" evidence="6">
    <location>
        <begin position="213"/>
        <end position="215"/>
    </location>
</feature>
<feature type="helix" evidence="6">
    <location>
        <begin position="217"/>
        <end position="221"/>
    </location>
</feature>
<feature type="strand" evidence="6">
    <location>
        <begin position="224"/>
        <end position="229"/>
    </location>
</feature>
<feature type="helix" evidence="6">
    <location>
        <begin position="233"/>
        <end position="236"/>
    </location>
</feature>
<feature type="turn" evidence="6">
    <location>
        <begin position="237"/>
        <end position="241"/>
    </location>
</feature>
<feature type="strand" evidence="6">
    <location>
        <begin position="246"/>
        <end position="259"/>
    </location>
</feature>
<feature type="strand" evidence="6">
    <location>
        <begin position="261"/>
        <end position="269"/>
    </location>
</feature>
<feature type="strand" evidence="6">
    <location>
        <begin position="277"/>
        <end position="281"/>
    </location>
</feature>
<feature type="helix" evidence="6">
    <location>
        <begin position="282"/>
        <end position="285"/>
    </location>
</feature>
<feature type="strand" evidence="6">
    <location>
        <begin position="293"/>
        <end position="302"/>
    </location>
</feature>
<feature type="helix" evidence="6">
    <location>
        <begin position="316"/>
        <end position="331"/>
    </location>
</feature>
<feature type="strand" evidence="6">
    <location>
        <begin position="335"/>
        <end position="337"/>
    </location>
</feature>
<feature type="turn" evidence="6">
    <location>
        <begin position="340"/>
        <end position="344"/>
    </location>
</feature>
<feature type="helix" evidence="6">
    <location>
        <begin position="349"/>
        <end position="364"/>
    </location>
</feature>
<reference key="1">
    <citation type="journal article" date="1994" name="J. Bacteriol.">
        <title>Genetic analysis of the O-specific lipopolysaccharide biosynthesis region (rfb) of Escherichia coli K-12 W3110: identification of genes that confer group 6 specificity to Shigella flexneri serotypes Y and 4a.</title>
        <authorList>
            <person name="Yao Z."/>
            <person name="Valvano M.A."/>
        </authorList>
    </citation>
    <scope>NUCLEOTIDE SEQUENCE [GENOMIC DNA]</scope>
    <source>
        <strain>K12 / W3110 / ATCC 27325 / DSM 5911</strain>
    </source>
</reference>
<reference key="2">
    <citation type="journal article" date="1994" name="J. Bacteriol.">
        <title>Structure of the O antigen of Escherichia coli K-12 and the sequence of its rfb gene cluster.</title>
        <authorList>
            <person name="Stevenson G."/>
            <person name="Neal B."/>
            <person name="Liu D."/>
            <person name="Hobbs M."/>
            <person name="Packer N.H."/>
            <person name="Batley M."/>
            <person name="Redmond J.W."/>
            <person name="Lindquist L."/>
            <person name="Reeves P.R."/>
        </authorList>
    </citation>
    <scope>NUCLEOTIDE SEQUENCE [GENOMIC DNA]</scope>
    <source>
        <strain>K12 / WG1</strain>
    </source>
</reference>
<reference key="3">
    <citation type="journal article" date="1996" name="DNA Res.">
        <title>A 460-kb DNA sequence of the Escherichia coli K-12 genome corresponding to the 40.1-50.0 min region on the linkage map.</title>
        <authorList>
            <person name="Itoh T."/>
            <person name="Aiba H."/>
            <person name="Baba T."/>
            <person name="Fujita K."/>
            <person name="Hayashi K."/>
            <person name="Inada T."/>
            <person name="Isono K."/>
            <person name="Kasai H."/>
            <person name="Kimura S."/>
            <person name="Kitakawa M."/>
            <person name="Kitagawa M."/>
            <person name="Makino K."/>
            <person name="Miki T."/>
            <person name="Mizobuchi K."/>
            <person name="Mori H."/>
            <person name="Mori T."/>
            <person name="Motomura K."/>
            <person name="Nakade S."/>
            <person name="Nakamura Y."/>
            <person name="Nashimoto H."/>
            <person name="Nishio Y."/>
            <person name="Oshima T."/>
            <person name="Saito N."/>
            <person name="Sampei G."/>
            <person name="Seki Y."/>
            <person name="Sivasundaram S."/>
            <person name="Tagami H."/>
            <person name="Takeda J."/>
            <person name="Takemoto K."/>
            <person name="Wada C."/>
            <person name="Yamamoto Y."/>
            <person name="Horiuchi T."/>
        </authorList>
    </citation>
    <scope>NUCLEOTIDE SEQUENCE [LARGE SCALE GENOMIC DNA]</scope>
    <source>
        <strain>K12 / W3110 / ATCC 27325 / DSM 5911</strain>
    </source>
</reference>
<reference key="4">
    <citation type="journal article" date="1997" name="Science">
        <title>The complete genome sequence of Escherichia coli K-12.</title>
        <authorList>
            <person name="Blattner F.R."/>
            <person name="Plunkett G. III"/>
            <person name="Bloch C.A."/>
            <person name="Perna N.T."/>
            <person name="Burland V."/>
            <person name="Riley M."/>
            <person name="Collado-Vides J."/>
            <person name="Glasner J.D."/>
            <person name="Rode C.K."/>
            <person name="Mayhew G.F."/>
            <person name="Gregor J."/>
            <person name="Davis N.W."/>
            <person name="Kirkpatrick H.A."/>
            <person name="Goeden M.A."/>
            <person name="Rose D.J."/>
            <person name="Mau B."/>
            <person name="Shao Y."/>
        </authorList>
    </citation>
    <scope>NUCLEOTIDE SEQUENCE [LARGE SCALE GENOMIC DNA]</scope>
    <source>
        <strain>K12 / MG1655 / ATCC 47076</strain>
    </source>
</reference>
<reference key="5">
    <citation type="journal article" date="2006" name="Mol. Syst. Biol.">
        <title>Highly accurate genome sequences of Escherichia coli K-12 strains MG1655 and W3110.</title>
        <authorList>
            <person name="Hayashi K."/>
            <person name="Morooka N."/>
            <person name="Yamamoto Y."/>
            <person name="Fujita K."/>
            <person name="Isono K."/>
            <person name="Choi S."/>
            <person name="Ohtsubo E."/>
            <person name="Baba T."/>
            <person name="Wanner B.L."/>
            <person name="Mori H."/>
            <person name="Horiuchi T."/>
        </authorList>
    </citation>
    <scope>NUCLEOTIDE SEQUENCE [LARGE SCALE GENOMIC DNA]</scope>
    <source>
        <strain>K12 / W3110 / ATCC 27325 / DSM 5911</strain>
    </source>
</reference>
<reference key="6">
    <citation type="journal article" date="1996" name="J. Bacteriol.">
        <title>Galactofuranose biosynthesis in Escherichia coli K-12: identification and cloning of UDP-galactopyranose mutase.</title>
        <authorList>
            <person name="Nassau P.M."/>
            <person name="Martin S.L."/>
            <person name="Brown R.E."/>
            <person name="Weston A."/>
            <person name="Monsey D."/>
            <person name="McNeil M.R."/>
            <person name="Duncan K."/>
        </authorList>
    </citation>
    <scope>PROTEIN SEQUENCE OF 1-15</scope>
    <scope>FUNCTION</scope>
    <scope>CATALYTIC ACTIVITY</scope>
    <scope>MASS SPECTROMETRY</scope>
    <scope>COFACTOR</scope>
    <scope>NOMENCLATURE</scope>
</reference>
<reference key="7">
    <citation type="journal article" date="2001" name="J. Am. Chem. Soc.">
        <title>Mechanistic investigation of UDP-galactopyranose mutase from Escherichia coli using 2- and 3-fluorinated UDP-galactofuranose as probes.</title>
        <authorList>
            <person name="Zhang Q."/>
            <person name="Liu H."/>
        </authorList>
    </citation>
    <scope>FUNCTION</scope>
    <scope>BIOPHYSICOCHEMICAL PROPERTIES</scope>
</reference>
<reference key="8">
    <citation type="journal article" date="2001" name="Nat. Struct. Biol.">
        <title>UDP-galactopyranose mutase has a novel structure and mechanism.</title>
        <authorList>
            <person name="Sanders D.A."/>
            <person name="Staines A.G."/>
            <person name="McMahon S.A."/>
            <person name="McNeil M.R."/>
            <person name="Whitfield C."/>
            <person name="Naismith J.H."/>
        </authorList>
    </citation>
    <scope>X-RAY CRYSTALLOGRAPHY (2.4 ANGSTROMS) IN COMPLEX WITH FAD</scope>
    <scope>MUTAGENESIS OF TYR-151; TRP-156; TYR-181; TYR-311 AND TYR-346</scope>
    <scope>SUBUNIT</scope>
</reference>
<protein>
    <recommendedName>
        <fullName>UDP-galactopyranose mutase</fullName>
        <shortName>UGM</shortName>
        <ecNumber>5.4.99.9</ecNumber>
    </recommendedName>
    <alternativeName>
        <fullName>UDP-GALP mutase</fullName>
    </alternativeName>
    <alternativeName>
        <fullName>Uridine 5-diphosphate galactopyranose mutase</fullName>
    </alternativeName>
</protein>
<proteinExistence type="evidence at protein level"/>
<name>GLF_ECOLI</name>
<keyword id="KW-0002">3D-structure</keyword>
<keyword id="KW-0903">Direct protein sequencing</keyword>
<keyword id="KW-0274">FAD</keyword>
<keyword id="KW-0285">Flavoprotein</keyword>
<keyword id="KW-0413">Isomerase</keyword>
<keyword id="KW-0448">Lipopolysaccharide biosynthesis</keyword>
<keyword id="KW-1185">Reference proteome</keyword>
<dbReference type="EC" id="5.4.99.9"/>
<dbReference type="EMBL" id="U03041">
    <property type="protein sequence ID" value="AAC31632.1"/>
    <property type="molecule type" value="Genomic_DNA"/>
</dbReference>
<dbReference type="EMBL" id="U09876">
    <property type="protein sequence ID" value="AAB88403.1"/>
    <property type="molecule type" value="Genomic_DNA"/>
</dbReference>
<dbReference type="EMBL" id="U00096">
    <property type="protein sequence ID" value="AAC75097.1"/>
    <property type="molecule type" value="Genomic_DNA"/>
</dbReference>
<dbReference type="EMBL" id="AP009048">
    <property type="protein sequence ID" value="BAA15878.1"/>
    <property type="molecule type" value="Genomic_DNA"/>
</dbReference>
<dbReference type="PIR" id="I69653">
    <property type="entry name" value="I69653"/>
</dbReference>
<dbReference type="RefSeq" id="NP_416540.1">
    <property type="nucleotide sequence ID" value="NC_000913.3"/>
</dbReference>
<dbReference type="RefSeq" id="WP_000272486.1">
    <property type="nucleotide sequence ID" value="NZ_LN832404.1"/>
</dbReference>
<dbReference type="PDB" id="1I8T">
    <property type="method" value="X-ray"/>
    <property type="resolution" value="2.40 A"/>
    <property type="chains" value="A/B=1-367"/>
</dbReference>
<dbReference type="PDBsum" id="1I8T"/>
<dbReference type="SMR" id="P37747"/>
<dbReference type="BioGRID" id="4260648">
    <property type="interactions" value="109"/>
</dbReference>
<dbReference type="DIP" id="DIP-6863N"/>
<dbReference type="FunCoup" id="P37747">
    <property type="interactions" value="130"/>
</dbReference>
<dbReference type="IntAct" id="P37747">
    <property type="interactions" value="4"/>
</dbReference>
<dbReference type="STRING" id="511145.b2036"/>
<dbReference type="ChEMBL" id="CHEMBL1075076"/>
<dbReference type="DrugBank" id="DB03147">
    <property type="generic name" value="Flavin adenine dinucleotide"/>
</dbReference>
<dbReference type="jPOST" id="P37747"/>
<dbReference type="PaxDb" id="511145-b2036"/>
<dbReference type="EnsemblBacteria" id="AAC75097">
    <property type="protein sequence ID" value="AAC75097"/>
    <property type="gene ID" value="b2036"/>
</dbReference>
<dbReference type="GeneID" id="945235"/>
<dbReference type="KEGG" id="ecj:JW2021"/>
<dbReference type="KEGG" id="eco:b2036"/>
<dbReference type="KEGG" id="ecoc:C3026_11470"/>
<dbReference type="PATRIC" id="fig|1411691.4.peg.215"/>
<dbReference type="EchoBASE" id="EB1924"/>
<dbReference type="eggNOG" id="COG0562">
    <property type="taxonomic scope" value="Bacteria"/>
</dbReference>
<dbReference type="HOGENOM" id="CLU_042118_0_0_6"/>
<dbReference type="InParanoid" id="P37747"/>
<dbReference type="OMA" id="INVHKYG"/>
<dbReference type="OrthoDB" id="9815989at2"/>
<dbReference type="PhylomeDB" id="P37747"/>
<dbReference type="BioCyc" id="EcoCyc:GALPMUT-MONOMER"/>
<dbReference type="BioCyc" id="MetaCyc:GALPMUT-MONOMER"/>
<dbReference type="BRENDA" id="5.4.99.9">
    <property type="organism ID" value="2026"/>
</dbReference>
<dbReference type="UniPathway" id="UPA00030"/>
<dbReference type="EvolutionaryTrace" id="P37747"/>
<dbReference type="PRO" id="PR:P37747"/>
<dbReference type="Proteomes" id="UP000000625">
    <property type="component" value="Chromosome"/>
</dbReference>
<dbReference type="GO" id="GO:0005829">
    <property type="term" value="C:cytosol"/>
    <property type="evidence" value="ECO:0000314"/>
    <property type="project" value="EcoCyc"/>
</dbReference>
<dbReference type="GO" id="GO:0050660">
    <property type="term" value="F:flavin adenine dinucleotide binding"/>
    <property type="evidence" value="ECO:0000314"/>
    <property type="project" value="EcoCyc"/>
</dbReference>
<dbReference type="GO" id="GO:0042803">
    <property type="term" value="F:protein homodimerization activity"/>
    <property type="evidence" value="ECO:0000314"/>
    <property type="project" value="EcoCyc"/>
</dbReference>
<dbReference type="GO" id="GO:0008767">
    <property type="term" value="F:UDP-galactopyranose mutase activity"/>
    <property type="evidence" value="ECO:0000314"/>
    <property type="project" value="EcoCyc"/>
</dbReference>
<dbReference type="GO" id="GO:0009103">
    <property type="term" value="P:lipopolysaccharide biosynthetic process"/>
    <property type="evidence" value="ECO:0007669"/>
    <property type="project" value="UniProtKB-UniPathway"/>
</dbReference>
<dbReference type="FunFam" id="3.40.50.720:FF:000397">
    <property type="entry name" value="UDP-galactopyranose mutase"/>
    <property type="match status" value="1"/>
</dbReference>
<dbReference type="FunFam" id="3.40.50.720:FF:000422">
    <property type="entry name" value="UDP-galactopyranose mutase"/>
    <property type="match status" value="1"/>
</dbReference>
<dbReference type="Gene3D" id="3.40.50.720">
    <property type="entry name" value="NAD(P)-binding Rossmann-like Domain"/>
    <property type="match status" value="3"/>
</dbReference>
<dbReference type="InterPro" id="IPR004379">
    <property type="entry name" value="UDP-GALP_mutase"/>
</dbReference>
<dbReference type="InterPro" id="IPR015899">
    <property type="entry name" value="UDP-GalPyranose_mutase_C"/>
</dbReference>
<dbReference type="NCBIfam" id="TIGR00031">
    <property type="entry name" value="UDP-GALP_mutase"/>
    <property type="match status" value="1"/>
</dbReference>
<dbReference type="PANTHER" id="PTHR21197">
    <property type="entry name" value="UDP-GALACTOPYRANOSE MUTASE"/>
    <property type="match status" value="1"/>
</dbReference>
<dbReference type="PANTHER" id="PTHR21197:SF0">
    <property type="entry name" value="UDP-GALACTOPYRANOSE MUTASE"/>
    <property type="match status" value="1"/>
</dbReference>
<dbReference type="Pfam" id="PF03275">
    <property type="entry name" value="GLF"/>
    <property type="match status" value="1"/>
</dbReference>
<dbReference type="Pfam" id="PF13450">
    <property type="entry name" value="NAD_binding_8"/>
    <property type="match status" value="1"/>
</dbReference>
<dbReference type="SUPFAM" id="SSF54373">
    <property type="entry name" value="FAD-linked reductases, C-terminal domain"/>
    <property type="match status" value="1"/>
</dbReference>
<dbReference type="SUPFAM" id="SSF51971">
    <property type="entry name" value="Nucleotide-binding domain"/>
    <property type="match status" value="1"/>
</dbReference>
<sequence length="367" mass="42966">MYDYIIVGSGLFGAVCANELKKLNKKVLVIEKRNHIGGNAYTEDCEGIQIHKYGAHIFHTNDKYIWDYVNDLVEFNRFTNSPLAIYKDKLFNLPFNMNTFHQMWGVKDPQEAQNIINAQKKKYGDKVPENLEEQAISLVGEDLYQALIKGYTEKQWGRSAKELPAFIIKRIPVRFTFDNNYFSDRYQGIPVGGYTKLIEKMLEGVDVKLGIDFLKDKDSLASKAHRIIYTGPIDQYFDYRFGALEYRSLKFETERHEFPNFQGNAVINFTDANVPYTRIIEHKHFDYVETKHTVVTKEYPLEWKVGDEPYYPVNDNKNMELFKKYRELASREDKVIFGGRLAEYKYYDMHQVISAALYQVKNIMSTD</sequence>